<gene>
    <name type="primary">SAMS1</name>
</gene>
<evidence type="ECO:0000250" key="1"/>
<evidence type="ECO:0000250" key="2">
    <source>
        <dbReference type="UniProtKB" id="P0A817"/>
    </source>
</evidence>
<evidence type="ECO:0000250" key="3">
    <source>
        <dbReference type="UniProtKB" id="P13444"/>
    </source>
</evidence>
<evidence type="ECO:0000250" key="4">
    <source>
        <dbReference type="UniProtKB" id="Q00266"/>
    </source>
</evidence>
<evidence type="ECO:0000250" key="5">
    <source>
        <dbReference type="UniProtKB" id="Q96551"/>
    </source>
</evidence>
<evidence type="ECO:0000305" key="6"/>
<sequence length="366" mass="39940">VAVDACLEQDSDSKVACETCTKTNLVMVFGEITTKANVDYEKIVRNTCRNIGFVSADVGLDADNCKVLVNIEQQSPDIAQGVHGHFTKKPEEIGAGDQGHMFGYATDETPELMPLSHVLATKLGARLTEVRKNGTCAWLRPDGNTQVTVEYYNDKGAMVPIRVHTVLISTQHDETVTNDEIAADLKEHVIKPVIPEKYLDSKTICHLNPSGRFVIGGPHGDAGLTGRKIIIDTYGGWGAHGGGAFSGKDPTKVDRRGAYIVRQAAKSIVASGLARRAIVQLLRAIGVPEPLSVFVDTYGTGKIPDREILKIVKETFDFRPGMISINLDLLRGGNGRFLKTAAYGHFGREDPDFTWEVVKPLKWEKA</sequence>
<accession>P49612</accession>
<proteinExistence type="evidence at transcript level"/>
<dbReference type="EC" id="2.5.1.6" evidence="5"/>
<dbReference type="EMBL" id="X82076">
    <property type="protein sequence ID" value="CAA57580.1"/>
    <property type="molecule type" value="mRNA"/>
</dbReference>
<dbReference type="EMBL" id="L36680">
    <property type="protein sequence ID" value="AAA58772.1"/>
    <property type="status" value="ALT_SEQ"/>
    <property type="molecule type" value="mRNA"/>
</dbReference>
<dbReference type="PIR" id="S66351">
    <property type="entry name" value="S66351"/>
</dbReference>
<dbReference type="PIR" id="T06592">
    <property type="entry name" value="T06592"/>
</dbReference>
<dbReference type="SMR" id="P49612"/>
<dbReference type="UniPathway" id="UPA00315">
    <property type="reaction ID" value="UER00080"/>
</dbReference>
<dbReference type="GO" id="GO:0005737">
    <property type="term" value="C:cytoplasm"/>
    <property type="evidence" value="ECO:0007669"/>
    <property type="project" value="UniProtKB-SubCell"/>
</dbReference>
<dbReference type="GO" id="GO:0005524">
    <property type="term" value="F:ATP binding"/>
    <property type="evidence" value="ECO:0007669"/>
    <property type="project" value="UniProtKB-KW"/>
</dbReference>
<dbReference type="GO" id="GO:0046872">
    <property type="term" value="F:metal ion binding"/>
    <property type="evidence" value="ECO:0007669"/>
    <property type="project" value="UniProtKB-KW"/>
</dbReference>
<dbReference type="GO" id="GO:0004478">
    <property type="term" value="F:methionine adenosyltransferase activity"/>
    <property type="evidence" value="ECO:0007669"/>
    <property type="project" value="UniProtKB-EC"/>
</dbReference>
<dbReference type="GO" id="GO:0006730">
    <property type="term" value="P:one-carbon metabolic process"/>
    <property type="evidence" value="ECO:0007669"/>
    <property type="project" value="UniProtKB-KW"/>
</dbReference>
<dbReference type="GO" id="GO:0006556">
    <property type="term" value="P:S-adenosylmethionine biosynthetic process"/>
    <property type="evidence" value="ECO:0007669"/>
    <property type="project" value="UniProtKB-UniPathway"/>
</dbReference>
<dbReference type="CDD" id="cd18079">
    <property type="entry name" value="S-AdoMet_synt"/>
    <property type="match status" value="1"/>
</dbReference>
<dbReference type="FunFam" id="3.30.300.10:FF:000003">
    <property type="entry name" value="S-adenosylmethionine synthase"/>
    <property type="match status" value="1"/>
</dbReference>
<dbReference type="FunFam" id="3.30.300.10:FF:000004">
    <property type="entry name" value="S-adenosylmethionine synthase"/>
    <property type="match status" value="1"/>
</dbReference>
<dbReference type="FunFam" id="3.30.300.10:FF:000011">
    <property type="entry name" value="S-adenosylmethionine synthase"/>
    <property type="match status" value="1"/>
</dbReference>
<dbReference type="Gene3D" id="3.30.300.10">
    <property type="match status" value="3"/>
</dbReference>
<dbReference type="InterPro" id="IPR022631">
    <property type="entry name" value="ADOMET_SYNTHASE_CS"/>
</dbReference>
<dbReference type="InterPro" id="IPR022630">
    <property type="entry name" value="S-AdoMet_synt_C"/>
</dbReference>
<dbReference type="InterPro" id="IPR022629">
    <property type="entry name" value="S-AdoMet_synt_central"/>
</dbReference>
<dbReference type="InterPro" id="IPR022628">
    <property type="entry name" value="S-AdoMet_synt_N"/>
</dbReference>
<dbReference type="InterPro" id="IPR002133">
    <property type="entry name" value="S-AdoMet_synthetase"/>
</dbReference>
<dbReference type="InterPro" id="IPR022636">
    <property type="entry name" value="S-AdoMet_synthetase_sfam"/>
</dbReference>
<dbReference type="NCBIfam" id="TIGR01034">
    <property type="entry name" value="metK"/>
    <property type="match status" value="1"/>
</dbReference>
<dbReference type="PANTHER" id="PTHR11964">
    <property type="entry name" value="S-ADENOSYLMETHIONINE SYNTHETASE"/>
    <property type="match status" value="1"/>
</dbReference>
<dbReference type="Pfam" id="PF02773">
    <property type="entry name" value="S-AdoMet_synt_C"/>
    <property type="match status" value="1"/>
</dbReference>
<dbReference type="Pfam" id="PF02772">
    <property type="entry name" value="S-AdoMet_synt_M"/>
    <property type="match status" value="1"/>
</dbReference>
<dbReference type="Pfam" id="PF00438">
    <property type="entry name" value="S-AdoMet_synt_N"/>
    <property type="match status" value="1"/>
</dbReference>
<dbReference type="PIRSF" id="PIRSF000497">
    <property type="entry name" value="MAT"/>
    <property type="match status" value="1"/>
</dbReference>
<dbReference type="SUPFAM" id="SSF55973">
    <property type="entry name" value="S-adenosylmethionine synthetase"/>
    <property type="match status" value="3"/>
</dbReference>
<dbReference type="PROSITE" id="PS00376">
    <property type="entry name" value="ADOMET_SYNTHASE_1"/>
    <property type="match status" value="1"/>
</dbReference>
<dbReference type="PROSITE" id="PS00377">
    <property type="entry name" value="ADOMET_SYNTHASE_2"/>
    <property type="match status" value="1"/>
</dbReference>
<name>METK1_PEA</name>
<keyword id="KW-0067">ATP-binding</keyword>
<keyword id="KW-0170">Cobalt</keyword>
<keyword id="KW-0963">Cytoplasm</keyword>
<keyword id="KW-0460">Magnesium</keyword>
<keyword id="KW-0479">Metal-binding</keyword>
<keyword id="KW-0547">Nucleotide-binding</keyword>
<keyword id="KW-0554">One-carbon metabolism</keyword>
<keyword id="KW-0630">Potassium</keyword>
<keyword id="KW-0808">Transferase</keyword>
<protein>
    <recommendedName>
        <fullName>S-adenosylmethionine synthase 1</fullName>
        <shortName>AdoMet synthase 1</shortName>
        <ecNumber evidence="5">2.5.1.6</ecNumber>
    </recommendedName>
    <alternativeName>
        <fullName>Methionine adenosyltransferase 1</fullName>
        <shortName>MAT 1</shortName>
    </alternativeName>
</protein>
<feature type="chain" id="PRO_0000174472" description="S-adenosylmethionine synthase 1">
    <location>
        <begin position="1" status="less than"/>
        <end position="366"/>
    </location>
</feature>
<feature type="binding site" evidence="2">
    <location>
        <position position="18"/>
    </location>
    <ligand>
        <name>K(+)</name>
        <dbReference type="ChEBI" id="CHEBI:29103"/>
    </ligand>
</feature>
<feature type="binding site" description="in other chain" evidence="2">
    <location>
        <position position="31"/>
    </location>
    <ligand>
        <name>L-methionine</name>
        <dbReference type="ChEBI" id="CHEBI:57844"/>
        <note>ligand shared between two neighboring subunits</note>
    </ligand>
</feature>
<feature type="binding site" description="in other chain" evidence="2">
    <location>
        <position position="74"/>
    </location>
    <ligand>
        <name>L-methionine</name>
        <dbReference type="ChEBI" id="CHEBI:57844"/>
        <note>ligand shared between two neighboring subunits</note>
    </ligand>
</feature>
<feature type="binding site" description="in other chain" evidence="4">
    <location>
        <begin position="142"/>
        <end position="144"/>
    </location>
    <ligand>
        <name>ATP</name>
        <dbReference type="ChEBI" id="CHEBI:30616"/>
        <note>ligand shared between two neighboring subunits</note>
    </ligand>
</feature>
<feature type="binding site" description="in other chain" evidence="4">
    <location>
        <begin position="210"/>
        <end position="213"/>
    </location>
    <ligand>
        <name>ATP</name>
        <dbReference type="ChEBI" id="CHEBI:30616"/>
        <note>ligand shared between two neighboring subunits</note>
    </ligand>
</feature>
<feature type="binding site" description="in other chain" evidence="4">
    <location>
        <position position="221"/>
    </location>
    <ligand>
        <name>ATP</name>
        <dbReference type="ChEBI" id="CHEBI:30616"/>
        <note>ligand shared between two neighboring subunits</note>
    </ligand>
</feature>
<feature type="binding site" evidence="2">
    <location>
        <position position="221"/>
    </location>
    <ligand>
        <name>L-methionine</name>
        <dbReference type="ChEBI" id="CHEBI:57844"/>
        <note>ligand shared between two neighboring subunits</note>
    </ligand>
</feature>
<feature type="binding site" description="in other chain" evidence="2">
    <location>
        <begin position="227"/>
        <end position="228"/>
    </location>
    <ligand>
        <name>ATP</name>
        <dbReference type="ChEBI" id="CHEBI:30616"/>
        <note>ligand shared between two neighboring subunits</note>
    </ligand>
</feature>
<feature type="binding site" evidence="2">
    <location>
        <position position="244"/>
    </location>
    <ligand>
        <name>ATP</name>
        <dbReference type="ChEBI" id="CHEBI:30616"/>
        <note>ligand shared between two neighboring subunits</note>
    </ligand>
</feature>
<feature type="binding site" evidence="2">
    <location>
        <position position="248"/>
    </location>
    <ligand>
        <name>ATP</name>
        <dbReference type="ChEBI" id="CHEBI:30616"/>
        <note>ligand shared between two neighboring subunits</note>
    </ligand>
</feature>
<feature type="binding site" evidence="3">
    <location>
        <position position="252"/>
    </location>
    <ligand>
        <name>ATP</name>
        <dbReference type="ChEBI" id="CHEBI:30616"/>
        <note>ligand shared between two neighboring subunits</note>
    </ligand>
</feature>
<feature type="binding site" description="in other chain" evidence="2">
    <location>
        <position position="252"/>
    </location>
    <ligand>
        <name>L-methionine</name>
        <dbReference type="ChEBI" id="CHEBI:57844"/>
        <note>ligand shared between two neighboring subunits</note>
    </ligand>
</feature>
<feature type="non-terminal residue">
    <location>
        <position position="1"/>
    </location>
</feature>
<reference key="1">
    <citation type="journal article" date="1996" name="Plant Mol. Biol.">
        <title>Hormonal regulation of S-adenosylmethionine synthase transcripts in pea ovaries.</title>
        <authorList>
            <person name="Gomez-Gomez L."/>
            <person name="Carrasco P."/>
        </authorList>
    </citation>
    <scope>NUCLEOTIDE SEQUENCE [MRNA]</scope>
    <source>
        <strain>cv. Alaska</strain>
        <tissue>Ovary</tissue>
    </source>
</reference>
<organism>
    <name type="scientific">Pisum sativum</name>
    <name type="common">Garden pea</name>
    <name type="synonym">Lathyrus oleraceus</name>
    <dbReference type="NCBI Taxonomy" id="3888"/>
    <lineage>
        <taxon>Eukaryota</taxon>
        <taxon>Viridiplantae</taxon>
        <taxon>Streptophyta</taxon>
        <taxon>Embryophyta</taxon>
        <taxon>Tracheophyta</taxon>
        <taxon>Spermatophyta</taxon>
        <taxon>Magnoliopsida</taxon>
        <taxon>eudicotyledons</taxon>
        <taxon>Gunneridae</taxon>
        <taxon>Pentapetalae</taxon>
        <taxon>rosids</taxon>
        <taxon>fabids</taxon>
        <taxon>Fabales</taxon>
        <taxon>Fabaceae</taxon>
        <taxon>Papilionoideae</taxon>
        <taxon>50 kb inversion clade</taxon>
        <taxon>NPAAA clade</taxon>
        <taxon>Hologalegina</taxon>
        <taxon>IRL clade</taxon>
        <taxon>Fabeae</taxon>
        <taxon>Pisum</taxon>
    </lineage>
</organism>
<comment type="function">
    <text evidence="5">Catalyzes the formation of S-adenosylmethionine from methionine and ATP. The reaction comprises two steps that are both catalyzed by the same enzyme: formation of S-adenosylmethionine (AdoMet) and triphosphate, and subsequent hydrolysis of the triphosphate.</text>
</comment>
<comment type="catalytic activity">
    <reaction evidence="5">
        <text>L-methionine + ATP + H2O = S-adenosyl-L-methionine + phosphate + diphosphate</text>
        <dbReference type="Rhea" id="RHEA:21080"/>
        <dbReference type="ChEBI" id="CHEBI:15377"/>
        <dbReference type="ChEBI" id="CHEBI:30616"/>
        <dbReference type="ChEBI" id="CHEBI:33019"/>
        <dbReference type="ChEBI" id="CHEBI:43474"/>
        <dbReference type="ChEBI" id="CHEBI:57844"/>
        <dbReference type="ChEBI" id="CHEBI:59789"/>
        <dbReference type="EC" id="2.5.1.6"/>
    </reaction>
</comment>
<comment type="cofactor">
    <cofactor evidence="5">
        <name>Mn(2+)</name>
        <dbReference type="ChEBI" id="CHEBI:29035"/>
    </cofactor>
    <cofactor evidence="5">
        <name>Mg(2+)</name>
        <dbReference type="ChEBI" id="CHEBI:18420"/>
    </cofactor>
    <cofactor evidence="5">
        <name>Co(2+)</name>
        <dbReference type="ChEBI" id="CHEBI:48828"/>
    </cofactor>
    <text evidence="3 5">Binds 2 divalent ions per subunit. The metal ions interact primarily with the substrate (By similarity). Can utilize magnesium, manganese or cobalt (in vitro) (By similarity).</text>
</comment>
<comment type="cofactor">
    <cofactor evidence="5">
        <name>K(+)</name>
        <dbReference type="ChEBI" id="CHEBI:29103"/>
    </cofactor>
    <text evidence="3">Binds 1 potassium ion per subunit. The potassium ion interacts primarily with the substrate (By similarity).</text>
</comment>
<comment type="pathway">
    <text evidence="5">Amino-acid biosynthesis; S-adenosyl-L-methionine biosynthesis; S-adenosyl-L-methionine from L-methionine: step 1/1.</text>
</comment>
<comment type="subunit">
    <text evidence="1">Homotetramer.</text>
</comment>
<comment type="subcellular location">
    <subcellularLocation>
        <location evidence="1">Cytoplasm</location>
    </subcellularLocation>
</comment>
<comment type="similarity">
    <text evidence="6">Belongs to the AdoMet synthase family.</text>
</comment>